<protein>
    <recommendedName>
        <fullName>Hydroxydechloroatrazine ethylaminohydrolase</fullName>
        <shortName>Hydroxyatrazine hydrolase</shortName>
        <ecNumber evidence="2">3.5.4.43</ecNumber>
    </recommendedName>
</protein>
<evidence type="ECO:0000250" key="1"/>
<evidence type="ECO:0000269" key="2">
    <source>
    </source>
</evidence>
<evidence type="ECO:0000305" key="3"/>
<proteinExistence type="evidence at protein level"/>
<organism>
    <name type="scientific">Pseudomonas sp. (strain ADP)</name>
    <dbReference type="NCBI Taxonomy" id="47660"/>
    <lineage>
        <taxon>Bacteria</taxon>
        <taxon>Pseudomonadati</taxon>
        <taxon>Pseudomonadota</taxon>
        <taxon>Gammaproteobacteria</taxon>
        <taxon>Pseudomonadales</taxon>
        <taxon>Pseudomonadaceae</taxon>
        <taxon>Pseudomonas</taxon>
    </lineage>
</organism>
<geneLocation type="plasmid">
    <name>pADP-1</name>
</geneLocation>
<dbReference type="EC" id="3.5.4.43" evidence="2"/>
<dbReference type="EMBL" id="U66917">
    <property type="protein sequence ID" value="AAC45138.1"/>
    <property type="molecule type" value="Genomic_DNA"/>
</dbReference>
<dbReference type="RefSeq" id="NP_862481.1">
    <property type="nucleotide sequence ID" value="NC_004956.1"/>
</dbReference>
<dbReference type="RefSeq" id="WP_011117160.1">
    <property type="nucleotide sequence ID" value="NZ_CM003636.1"/>
</dbReference>
<dbReference type="SMR" id="P95442"/>
<dbReference type="KEGG" id="ag:AAC45138"/>
<dbReference type="BioCyc" id="MetaCyc:MONOMER-902"/>
<dbReference type="SABIO-RK" id="P95442"/>
<dbReference type="UniPathway" id="UPA00008">
    <property type="reaction ID" value="UER00500"/>
</dbReference>
<dbReference type="GO" id="GO:0005737">
    <property type="term" value="C:cytoplasm"/>
    <property type="evidence" value="ECO:0007669"/>
    <property type="project" value="UniProtKB-SubCell"/>
</dbReference>
<dbReference type="GO" id="GO:0018763">
    <property type="term" value="F:hydroxydechloroatrazine ethylaminohydrolase activity"/>
    <property type="evidence" value="ECO:0007669"/>
    <property type="project" value="UniProtKB-EC"/>
</dbReference>
<dbReference type="GO" id="GO:0046872">
    <property type="term" value="F:metal ion binding"/>
    <property type="evidence" value="ECO:0007669"/>
    <property type="project" value="UniProtKB-KW"/>
</dbReference>
<dbReference type="GO" id="GO:0019381">
    <property type="term" value="P:atrazine catabolic process"/>
    <property type="evidence" value="ECO:0007669"/>
    <property type="project" value="UniProtKB-UniPathway"/>
</dbReference>
<dbReference type="CDD" id="cd01298">
    <property type="entry name" value="ATZ_TRZ_like"/>
    <property type="match status" value="1"/>
</dbReference>
<dbReference type="Gene3D" id="3.20.20.140">
    <property type="entry name" value="Metal-dependent hydrolases"/>
    <property type="match status" value="1"/>
</dbReference>
<dbReference type="Gene3D" id="2.30.40.10">
    <property type="entry name" value="Urease, subunit C, domain 1"/>
    <property type="match status" value="1"/>
</dbReference>
<dbReference type="InterPro" id="IPR006680">
    <property type="entry name" value="Amidohydro-rel"/>
</dbReference>
<dbReference type="InterPro" id="IPR011059">
    <property type="entry name" value="Metal-dep_hydrolase_composite"/>
</dbReference>
<dbReference type="InterPro" id="IPR032466">
    <property type="entry name" value="Metal_Hydrolase"/>
</dbReference>
<dbReference type="InterPro" id="IPR050287">
    <property type="entry name" value="MTA/SAH_deaminase"/>
</dbReference>
<dbReference type="PANTHER" id="PTHR43794:SF11">
    <property type="entry name" value="AMIDOHYDROLASE-RELATED DOMAIN-CONTAINING PROTEIN"/>
    <property type="match status" value="1"/>
</dbReference>
<dbReference type="PANTHER" id="PTHR43794">
    <property type="entry name" value="AMINOHYDROLASE SSNA-RELATED"/>
    <property type="match status" value="1"/>
</dbReference>
<dbReference type="Pfam" id="PF01979">
    <property type="entry name" value="Amidohydro_1"/>
    <property type="match status" value="1"/>
</dbReference>
<dbReference type="SUPFAM" id="SSF51338">
    <property type="entry name" value="Composite domain of metallo-dependent hydrolases"/>
    <property type="match status" value="2"/>
</dbReference>
<dbReference type="SUPFAM" id="SSF51556">
    <property type="entry name" value="Metallo-dependent hydrolases"/>
    <property type="match status" value="1"/>
</dbReference>
<sequence>MTTTLYTGFHQLVTGDVAGTVLNGVDILVRDGEIIGLGPDLPRTLAPIGVGQEQGVEVVNCRGLTAYPGLINTHHHFFQAFVRNLAPLDWTQLDVLAWLRKIYPVFALVDEDCIYHSTVVSMAELIKHGCTTAFDHQYNYSRRGGPFLVDRQFDAANLLGLRFHAGRGCITLPMAEGSTIPDAMRESTDTFLADCERLVSRFHDPRPFAMQRVVVAPSSPVIAYPETFVESARLARHLGVSLHTHLGEGETPAMVARFGERSLDWCENRGFVGPDVWLAHGWEFTAADIARLAATGTGVAHCPAPVFLVGAEVTDIPAMAAAGVRVGFGVDGHASNDSSNLAECIRLAYLLQCLKASERQHPVPAPYDFLRMATQGGADCLNRPDLGALAVGRAADFFAVDLNRIEYIGANHDPRSLPAKVGFSGPVDMTVINGKVVWRNGEFPGLDEMELARAADGVFRRVIYGDPLVAALRRGTGVTPC</sequence>
<accession>P95442</accession>
<name>ATZB_PSESD</name>
<keyword id="KW-0963">Cytoplasm</keyword>
<keyword id="KW-0378">Hydrolase</keyword>
<keyword id="KW-0479">Metal-binding</keyword>
<keyword id="KW-0614">Plasmid</keyword>
<keyword id="KW-0862">Zinc</keyword>
<reference key="1">
    <citation type="journal article" date="1997" name="Appl. Environ. Microbiol.">
        <title>The atzB gene of Pseudomonas sp. strain ADP encodes the second enzyme of a novel atrazine degradation pathway.</title>
        <authorList>
            <person name="Boundy-Mills K.L."/>
            <person name="de Souza M.L."/>
            <person name="Mandelbaum R.T."/>
            <person name="Wackett L.P."/>
            <person name="Sadowsky M.J."/>
        </authorList>
    </citation>
    <scope>NUCLEOTIDE SEQUENCE [GENOMIC DNA]</scope>
</reference>
<reference key="2">
    <citation type="journal article" date="2007" name="J. Bacteriol.">
        <title>Hydroxyatrazine N-ethylaminohydrolase (AtzB): an amidohydrolase superfamily enzyme catalyzing deamination and dechlorination.</title>
        <authorList>
            <person name="Seffernick J.L."/>
            <person name="Aleem A."/>
            <person name="Osborne J.P."/>
            <person name="Johnson G."/>
            <person name="Sadowsky M.J."/>
            <person name="Wackett L.P."/>
        </authorList>
    </citation>
    <scope>FUNCTION</scope>
    <scope>CATALYTIC ACTIVITY</scope>
    <scope>SUBSTRATE SPECIFICITY</scope>
    <scope>BIOPHYSICOCHEMICAL PROPERTIES</scope>
    <scope>COFACTOR</scope>
    <scope>SUBUNIT</scope>
</reference>
<gene>
    <name type="primary">atzB</name>
</gene>
<feature type="chain" id="PRO_0000122295" description="Hydroxydechloroatrazine ethylaminohydrolase">
    <location>
        <begin position="1"/>
        <end position="481"/>
    </location>
</feature>
<feature type="binding site" evidence="1">
    <location>
        <position position="74"/>
    </location>
    <ligand>
        <name>Zn(2+)</name>
        <dbReference type="ChEBI" id="CHEBI:29105"/>
    </ligand>
</feature>
<feature type="binding site" evidence="1">
    <location>
        <position position="76"/>
    </location>
    <ligand>
        <name>Zn(2+)</name>
        <dbReference type="ChEBI" id="CHEBI:29105"/>
    </ligand>
</feature>
<feature type="binding site" evidence="1">
    <location>
        <position position="245"/>
    </location>
    <ligand>
        <name>Zn(2+)</name>
        <dbReference type="ChEBI" id="CHEBI:29105"/>
    </ligand>
</feature>
<feature type="binding site" evidence="1">
    <location>
        <position position="331"/>
    </location>
    <ligand>
        <name>Zn(2+)</name>
        <dbReference type="ChEBI" id="CHEBI:29105"/>
    </ligand>
</feature>
<comment type="function">
    <text evidence="2">Catalyzes the deamination reaction of hydroxyatrazine to N-isopropylammelide (dihydroxy-isopropyl-atrazine). The enzyme is also capable of catalyzing some dechlorinating reactions.</text>
</comment>
<comment type="catalytic activity">
    <reaction evidence="2">
        <text>hydroxyatrazine + H2O + H(+) = N-isopropylammelide + ethylamine</text>
        <dbReference type="Rhea" id="RHEA:23092"/>
        <dbReference type="ChEBI" id="CHEBI:15377"/>
        <dbReference type="ChEBI" id="CHEBI:15378"/>
        <dbReference type="ChEBI" id="CHEBI:17247"/>
        <dbReference type="ChEBI" id="CHEBI:18316"/>
        <dbReference type="ChEBI" id="CHEBI:566789"/>
        <dbReference type="EC" id="3.5.4.43"/>
    </reaction>
</comment>
<comment type="cofactor">
    <cofactor evidence="2">
        <name>Zn(2+)</name>
        <dbReference type="ChEBI" id="CHEBI:29105"/>
    </cofactor>
    <text evidence="2">Binds 1 zinc ion per subunit.</text>
</comment>
<comment type="biophysicochemical properties">
    <kinetics>
        <KM evidence="2">20 uM for hydroxyatrazine</KM>
        <KM evidence="2">40 uM for 6-hydroxy-4-(N-isopropylamino)-2-(N-methylamino)-1,3,5-triazine</KM>
        <KM evidence="2">29 uM for 2,4-diisopropylamino-6-hydroxy-1,3,5-triazine</KM>
        <KM evidence="2">120 uM for 2-chloro-4-hydroxy-6-(N-isopropylamino)-1,3,5-triazine</KM>
        <KM evidence="2">230 uM for 2-chloro-4-(N-ethylamino)-6-hydroxy-1,3,5-triazine</KM>
    </kinetics>
    <phDependence>
        <text evidence="2">Optimum pH is 6.5-7.5.</text>
    </phDependence>
</comment>
<comment type="pathway">
    <text>Xenobiotic degradation; atrazine degradation; cyanurate from atrazine: step 2/3.</text>
</comment>
<comment type="subunit">
    <text evidence="2">Homodimer.</text>
</comment>
<comment type="subcellular location">
    <subcellularLocation>
        <location evidence="3">Cytoplasm</location>
    </subcellularLocation>
</comment>
<comment type="similarity">
    <text evidence="3">Belongs to the metallo-dependent hydrolases superfamily. ATZ/TRZ family.</text>
</comment>